<dbReference type="EC" id="2.3.3.17" evidence="5"/>
<dbReference type="SMR" id="P0DO77"/>
<dbReference type="GO" id="GO:0009507">
    <property type="term" value="C:chloroplast"/>
    <property type="evidence" value="ECO:0007669"/>
    <property type="project" value="UniProtKB-SubCell"/>
</dbReference>
<dbReference type="GO" id="GO:0003852">
    <property type="term" value="F:2-isopropylmalate synthase activity"/>
    <property type="evidence" value="ECO:0007669"/>
    <property type="project" value="TreeGrafter"/>
</dbReference>
<dbReference type="GO" id="GO:0046872">
    <property type="term" value="F:metal ion binding"/>
    <property type="evidence" value="ECO:0007669"/>
    <property type="project" value="UniProtKB-KW"/>
</dbReference>
<dbReference type="GO" id="GO:0009098">
    <property type="term" value="P:L-leucine biosynthetic process"/>
    <property type="evidence" value="ECO:0007669"/>
    <property type="project" value="TreeGrafter"/>
</dbReference>
<dbReference type="CDD" id="cd07940">
    <property type="entry name" value="DRE_TIM_IPMS"/>
    <property type="match status" value="1"/>
</dbReference>
<dbReference type="FunFam" id="1.10.238.260:FF:000001">
    <property type="entry name" value="2-isopropylmalate synthase"/>
    <property type="match status" value="1"/>
</dbReference>
<dbReference type="FunFam" id="3.20.20.70:FF:000010">
    <property type="entry name" value="2-isopropylmalate synthase"/>
    <property type="match status" value="1"/>
</dbReference>
<dbReference type="Gene3D" id="1.10.238.260">
    <property type="match status" value="1"/>
</dbReference>
<dbReference type="Gene3D" id="3.20.20.70">
    <property type="entry name" value="Aldolase class I"/>
    <property type="match status" value="1"/>
</dbReference>
<dbReference type="InterPro" id="IPR050073">
    <property type="entry name" value="2-IPM_HCS-like"/>
</dbReference>
<dbReference type="InterPro" id="IPR002034">
    <property type="entry name" value="AIPM/Hcit_synth_CS"/>
</dbReference>
<dbReference type="InterPro" id="IPR013785">
    <property type="entry name" value="Aldolase_TIM"/>
</dbReference>
<dbReference type="InterPro" id="IPR054691">
    <property type="entry name" value="LeuA/HCS_post-cat"/>
</dbReference>
<dbReference type="InterPro" id="IPR000891">
    <property type="entry name" value="PYR_CT"/>
</dbReference>
<dbReference type="NCBIfam" id="NF002086">
    <property type="entry name" value="PRK00915.1-3"/>
    <property type="match status" value="1"/>
</dbReference>
<dbReference type="PANTHER" id="PTHR10277">
    <property type="entry name" value="HOMOCITRATE SYNTHASE-RELATED"/>
    <property type="match status" value="1"/>
</dbReference>
<dbReference type="PANTHER" id="PTHR10277:SF60">
    <property type="entry name" value="METHYLTHIOALKYLMALATE SYNTHASE 1, CHLOROPLASTIC-RELATED"/>
    <property type="match status" value="1"/>
</dbReference>
<dbReference type="Pfam" id="PF22617">
    <property type="entry name" value="HCS_D2"/>
    <property type="match status" value="1"/>
</dbReference>
<dbReference type="Pfam" id="PF00682">
    <property type="entry name" value="HMGL-like"/>
    <property type="match status" value="1"/>
</dbReference>
<dbReference type="SUPFAM" id="SSF51569">
    <property type="entry name" value="Aldolase"/>
    <property type="match status" value="1"/>
</dbReference>
<dbReference type="PROSITE" id="PS00815">
    <property type="entry name" value="AIPM_HOMOCIT_SYNTH_1"/>
    <property type="match status" value="1"/>
</dbReference>
<dbReference type="PROSITE" id="PS00816">
    <property type="entry name" value="AIPM_HOMOCIT_SYNTH_2"/>
    <property type="match status" value="1"/>
</dbReference>
<dbReference type="PROSITE" id="PS50991">
    <property type="entry name" value="PYR_CT"/>
    <property type="match status" value="1"/>
</dbReference>
<sequence>MSFSPTYSIVMASPLLTSSQMIPTTGSTVGFRSILPFGSLRLTRPYKKTSLFISYCSSVSKKAKTSATDLKPVVERWPEYIPNKLSDKNYVRVYDTTLRDGEQAPGAALTPPQKIEIALQLAKLRVDVMEVGFPVSSEEEFETIKTIAKTVGNEVDEETGYVPVISALARSIQRDIEAAWESVKYAKRPRVGIFTPTSDIHMKYKLQKTREEVIEMVASSVRFAKSLGCKDIQFGCEDAGRSEKEFLCKILGEAIKAGATAVNVADTVGINMPEEYGELVRYLKANTPGIDDIVFSVHCHNDLGVATANTIAGVCAGARQVEVTVNGIGERSGNAPLEEVVMALKCRGAYVMDGVYTRIDTRQIMATSKMVQEYTGLYVQPHKPIVGANCFVHESGVHQDGILKNRSTYEILSPEDVGVVKSQNSGIVLGKLSGRHAVKDRLKELGYELDDEKFNDIFSRFRDLTKQKKRITDADLKALVTTCGDEKLNGANGKESNGYVPVPQISSMV</sequence>
<name>MAM11_EUTJA</name>
<organism>
    <name type="scientific">Eutrema japonicum</name>
    <name type="common">Wasabi plant</name>
    <name type="synonym">Eutrema wasabi</name>
    <dbReference type="NCBI Taxonomy" id="75806"/>
    <lineage>
        <taxon>Eukaryota</taxon>
        <taxon>Viridiplantae</taxon>
        <taxon>Streptophyta</taxon>
        <taxon>Embryophyta</taxon>
        <taxon>Tracheophyta</taxon>
        <taxon>Spermatophyta</taxon>
        <taxon>Magnoliopsida</taxon>
        <taxon>eudicotyledons</taxon>
        <taxon>Gunneridae</taxon>
        <taxon>Pentapetalae</taxon>
        <taxon>rosids</taxon>
        <taxon>malvids</taxon>
        <taxon>Brassicales</taxon>
        <taxon>Brassicaceae</taxon>
        <taxon>Eutremeae</taxon>
        <taxon>Eutrema</taxon>
    </lineage>
</organism>
<keyword id="KW-0150">Chloroplast</keyword>
<keyword id="KW-0464">Manganese</keyword>
<keyword id="KW-0479">Metal-binding</keyword>
<keyword id="KW-0934">Plastid</keyword>
<keyword id="KW-0808">Transferase</keyword>
<keyword id="KW-0809">Transit peptide</keyword>
<reference key="1">
    <citation type="journal article" date="2024" name="J. Biosci. Bioeng.">
        <title>Characterization of unique EDTA-insensitive methylthioalkylmalate synthase from Eutrema japonicum and its potential application in synthetic biology.</title>
        <authorList>
            <person name="Medhanavyn D."/>
            <person name="Muranaka T."/>
            <person name="Yasumoto S."/>
        </authorList>
    </citation>
    <scope>NUCLEOTIDE SEQUENCE</scope>
    <scope>FUNCTION</scope>
    <scope>CATALYTIC ACTIVITY</scope>
    <scope>BIOPHYSICOCHEMICAL PROPERTIES</scope>
    <scope>COFACTOR</scope>
    <scope>ACTIVITY REGULATION</scope>
    <scope>PATHWAY</scope>
</reference>
<protein>
    <recommendedName>
        <fullName evidence="6">Methylthioalkylmalate synthase 1-1, chloroplastic</fullName>
        <shortName evidence="6">EjMAM1-1</shortName>
        <ecNumber evidence="5">2.3.3.17</ecNumber>
    </recommendedName>
</protein>
<comment type="function">
    <text evidence="5">Determines the side chain length of aliphatic glucosinolate structures (PubMed:38614832). Involved in the biosynthesis of glucosinolate derivative natural products such as 6-(methylsulfinyl)hexylisothiocyanate (6-MSITC), a compound found in wasabi with diverse health-promoting properties (PubMed:38614832). Catalyzes the conversion of 4-methylsulfanyl-2-oxobutanoate (4-MTOB) into 2-(2-methylsulfanyl)ethylmalate (2-(2-MT)EM) (PubMed:38614832).</text>
</comment>
<comment type="catalytic activity">
    <reaction evidence="5">
        <text>4-methylsulfanyl-2-oxobutanoate + acetyl-CoA + H2O = 2-(2-methylsulfanyl)ethylmalate + CoA + H(+)</text>
        <dbReference type="Rhea" id="RHEA:25601"/>
        <dbReference type="ChEBI" id="CHEBI:15377"/>
        <dbReference type="ChEBI" id="CHEBI:15378"/>
        <dbReference type="ChEBI" id="CHEBI:16723"/>
        <dbReference type="ChEBI" id="CHEBI:57287"/>
        <dbReference type="ChEBI" id="CHEBI:57288"/>
        <dbReference type="ChEBI" id="CHEBI:58816"/>
        <dbReference type="EC" id="2.3.3.17"/>
    </reaction>
</comment>
<comment type="cofactor">
    <cofactor evidence="5">
        <name>Mn(2+)</name>
        <dbReference type="ChEBI" id="CHEBI:29035"/>
    </cofactor>
    <cofactor evidence="5">
        <name>Co(2+)</name>
        <dbReference type="ChEBI" id="CHEBI:48828"/>
    </cofactor>
    <text evidence="5">Strongly activated by Mn(2+) and Co(2+), and weakly activated by Fe(2+), Ni(2+), Mg(2+) and Ca(2+).</text>
</comment>
<comment type="activity regulation">
    <text evidence="5">Inhibited by EDTA, Cu(2+) and Zn(2+).</text>
</comment>
<comment type="biophysicochemical properties">
    <kinetics>
        <KM evidence="5">1.45 mM for 4-methylsulfanyl-2-oxobutanoate</KM>
        <text evidence="5">MAM1-1 is 2000 time slower than MAM1-2 to catalyze the conversion of 6-(methylsulfinyl)hexylisothiocyanate into 2-(2-methylsulfanyl)ethylmalate.</text>
    </kinetics>
    <phDependence>
        <text evidence="5">Optimum pH is 8.</text>
    </phDependence>
</comment>
<comment type="pathway">
    <text evidence="5">Secondary metabolite biosynthesis.</text>
</comment>
<comment type="subunit">
    <text evidence="2">Monomer.</text>
</comment>
<comment type="subcellular location">
    <subcellularLocation>
        <location evidence="3">Plastid</location>
        <location evidence="3">Chloroplast</location>
    </subcellularLocation>
</comment>
<comment type="domain">
    <text evidence="2">The N-terminal part of the protein controls substrate specificity.</text>
</comment>
<comment type="similarity">
    <text evidence="7">Belongs to the alpha-IPM synthase/homocitrate synthase family.</text>
</comment>
<proteinExistence type="evidence at protein level"/>
<evidence type="ECO:0000250" key="1">
    <source>
        <dbReference type="UniProtKB" id="P0DO78"/>
    </source>
</evidence>
<evidence type="ECO:0000250" key="2">
    <source>
        <dbReference type="UniProtKB" id="Q9FG67"/>
    </source>
</evidence>
<evidence type="ECO:0000255" key="3"/>
<evidence type="ECO:0000255" key="4">
    <source>
        <dbReference type="PROSITE-ProRule" id="PRU01151"/>
    </source>
</evidence>
<evidence type="ECO:0000269" key="5">
    <source>
    </source>
</evidence>
<evidence type="ECO:0000303" key="6">
    <source>
    </source>
</evidence>
<evidence type="ECO:0000305" key="7"/>
<feature type="transit peptide" description="Chloroplast" evidence="3">
    <location>
        <begin position="1"/>
        <end position="55"/>
    </location>
</feature>
<feature type="chain" id="PRO_0000461057" description="Methylthioalkylmalate synthase 1-1, chloroplastic">
    <location>
        <begin position="56"/>
        <end position="509"/>
    </location>
</feature>
<feature type="domain" description="Pyruvate carboxyltransferase" evidence="4">
    <location>
        <begin position="91"/>
        <end position="365"/>
    </location>
</feature>
<feature type="binding site" evidence="1">
    <location>
        <position position="100"/>
    </location>
    <ligand>
        <name>Mn(2+)</name>
        <dbReference type="ChEBI" id="CHEBI:29035"/>
    </ligand>
</feature>
<feature type="binding site" evidence="1">
    <location>
        <position position="298"/>
    </location>
    <ligand>
        <name>Mn(2+)</name>
        <dbReference type="ChEBI" id="CHEBI:29035"/>
    </ligand>
</feature>
<feature type="binding site" evidence="1">
    <location>
        <position position="300"/>
    </location>
    <ligand>
        <name>Mn(2+)</name>
        <dbReference type="ChEBI" id="CHEBI:29035"/>
    </ligand>
</feature>
<gene>
    <name evidence="6" type="primary">MAM1-1</name>
</gene>
<accession>P0DO77</accession>